<accession>Q9WZ27</accession>
<proteinExistence type="inferred from homology"/>
<comment type="function">
    <text evidence="1">Large subunit of the glutamine-dependent carbamoyl phosphate synthetase (CPSase). CPSase catalyzes the formation of carbamoyl phosphate from the ammonia moiety of glutamine, carbonate, and phosphate donated by ATP, constituting the first step of 2 biosynthetic pathways, one leading to arginine and/or urea and the other to pyrimidine nucleotides. The large subunit (synthetase) binds the substrates ammonia (free or transferred from glutamine from the small subunit), hydrogencarbonate and ATP and carries out an ATP-coupled ligase reaction, activating hydrogencarbonate by forming carboxy phosphate which reacts with ammonia to form carbamoyl phosphate.</text>
</comment>
<comment type="catalytic activity">
    <reaction evidence="1">
        <text>hydrogencarbonate + L-glutamine + 2 ATP + H2O = carbamoyl phosphate + L-glutamate + 2 ADP + phosphate + 2 H(+)</text>
        <dbReference type="Rhea" id="RHEA:18633"/>
        <dbReference type="ChEBI" id="CHEBI:15377"/>
        <dbReference type="ChEBI" id="CHEBI:15378"/>
        <dbReference type="ChEBI" id="CHEBI:17544"/>
        <dbReference type="ChEBI" id="CHEBI:29985"/>
        <dbReference type="ChEBI" id="CHEBI:30616"/>
        <dbReference type="ChEBI" id="CHEBI:43474"/>
        <dbReference type="ChEBI" id="CHEBI:58228"/>
        <dbReference type="ChEBI" id="CHEBI:58359"/>
        <dbReference type="ChEBI" id="CHEBI:456216"/>
        <dbReference type="EC" id="6.3.5.5"/>
    </reaction>
</comment>
<comment type="catalytic activity">
    <molecule>Carbamoyl phosphate synthase large chain</molecule>
    <reaction evidence="1">
        <text>hydrogencarbonate + NH4(+) + 2 ATP = carbamoyl phosphate + 2 ADP + phosphate + 2 H(+)</text>
        <dbReference type="Rhea" id="RHEA:18029"/>
        <dbReference type="ChEBI" id="CHEBI:15378"/>
        <dbReference type="ChEBI" id="CHEBI:17544"/>
        <dbReference type="ChEBI" id="CHEBI:28938"/>
        <dbReference type="ChEBI" id="CHEBI:30616"/>
        <dbReference type="ChEBI" id="CHEBI:43474"/>
        <dbReference type="ChEBI" id="CHEBI:58228"/>
        <dbReference type="ChEBI" id="CHEBI:456216"/>
        <dbReference type="EC" id="6.3.4.16"/>
    </reaction>
</comment>
<comment type="cofactor">
    <cofactor evidence="1">
        <name>Mg(2+)</name>
        <dbReference type="ChEBI" id="CHEBI:18420"/>
    </cofactor>
    <cofactor evidence="1">
        <name>Mn(2+)</name>
        <dbReference type="ChEBI" id="CHEBI:29035"/>
    </cofactor>
    <text evidence="1">Binds 4 Mg(2+) or Mn(2+) ions per subunit.</text>
</comment>
<comment type="pathway">
    <text evidence="1">Amino-acid biosynthesis; L-arginine biosynthesis; carbamoyl phosphate from bicarbonate: step 1/1.</text>
</comment>
<comment type="pathway">
    <text evidence="1">Pyrimidine metabolism; UMP biosynthesis via de novo pathway; (S)-dihydroorotate from bicarbonate: step 1/3.</text>
</comment>
<comment type="subunit">
    <text evidence="1">Composed of two chains; the small (or glutamine) chain promotes the hydrolysis of glutamine to ammonia, which is used by the large (or ammonia) chain to synthesize carbamoyl phosphate. Tetramer of heterodimers (alpha,beta)4.</text>
</comment>
<comment type="domain">
    <text evidence="1">The large subunit is composed of 2 ATP-grasp domains that are involved in binding the 2 ATP molecules needed for carbamoyl phosphate synthesis. The N-terminal ATP-grasp domain (referred to as the carboxyphosphate synthetic component) catalyzes the ATP-dependent phosphorylation of hydrogencarbonate to carboxyphosphate and the subsequent nucleophilic attack by ammonia to form a carbamate intermediate. The C-terminal ATP-grasp domain (referred to as the carbamoyl phosphate synthetic component) then catalyzes the phosphorylation of carbamate with the second ATP to form the end product carbamoyl phosphate. The reactive and unstable enzyme intermediates are sequentially channeled from one active site to the next through the interior of the protein over a distance of at least 96 A.</text>
</comment>
<comment type="similarity">
    <text evidence="1">Belongs to the CarB family.</text>
</comment>
<gene>
    <name evidence="1" type="primary">carB</name>
    <name type="ordered locus">TM_0557</name>
</gene>
<organism>
    <name type="scientific">Thermotoga maritima (strain ATCC 43589 / DSM 3109 / JCM 10099 / NBRC 100826 / MSB8)</name>
    <dbReference type="NCBI Taxonomy" id="243274"/>
    <lineage>
        <taxon>Bacteria</taxon>
        <taxon>Thermotogati</taxon>
        <taxon>Thermotogota</taxon>
        <taxon>Thermotogae</taxon>
        <taxon>Thermotogales</taxon>
        <taxon>Thermotogaceae</taxon>
        <taxon>Thermotoga</taxon>
    </lineage>
</organism>
<name>CARB_THEMA</name>
<sequence length="1099" mass="121317">MPKREDIKRILVIGSGPITIGQAAEFDYSGTQALKALKSAGYEVIIVNSNSATIMTDPEFSDAVYIEPLTVEFLEKIIEKERPDALLPTLGGQTALNLAVELAERGILDKYGVQLIGAKLESIKKAEDRELFKETMEKAGLEVLRSRLVNNLADALETAREFGYPVIIRPSFTLGGTGGGIAFNEEELRDIVTKGLIESPVHTVLIEESVLGWKEYELEVVRDGAGNFIVVCSIENLDPMGIHTGDSITVAPAQTLTDVEYQRMRDAAYKVIDAIGIETGGSNIQFALDPETGRMVVIEMNPRVSRSSALASKATGYPIAKVAALLAVGFTLDEIPNYITGKTMAAFEPSIDYVVVKIPRFQLEKFPGADPRLNTQMKSVGEVMAIGRTFKEALGKALRSLELDAAPKLDLEHIREHLANPTPERISYVFAAFRNGMDVEEVHELTKIDRWFLREMKACIELEEELKLKKFDVEILKKAKQWGYSDREIAEIWGVSEKEIRKMREDNRIFPVYKMVDTCAAEFEAQTPYYYSTYNGVENEAVPSDREKIMILGSGPNRIGQGIEFDYTNVHGVWSFQEEGYETIMVNSNPETVSTDYDTSDRLYFEPLTVEDVLEIVRNEKPKGVVVAFGGQTPLKIAKYLVEERVNIIGTSFESIEIAEDREKFAKLLKQIGLKCPPFGTASSVEEALRVAENLGYPVLVRPSYVLGGRAMAIVDTPQELEMYVKEAAVVSPGYPVLIDKFLEDAIELDVDVVSDGKYVWIAGLMEQIEEAGVHSGDSACVLPPVSLSEKLVEEIEETVYKLVKALKVVGVANIQLAVKDEEIYIIEANPRASRTVPFVSKAIGIPVARIAAKIMVGRNLPELLSEYFPYPTRPGVKVDKLGESEILPTPWPKMFSVKEVVIPFHKFPGTDVLLGPEMRSTGEVMGIGEDFAEAFAKAQIAAGNPLPTTGAILATVADKDKREAVPLLAHLADMGFEIYATRGTAKALQSHGVEVKVVPKVGEGRPDVIDLLEQGKISLVVITQSSDEPALVAVSHGKEPFKVEGRRTVGYMIRTTALKRKIPYLTTVESLRAAVAAIRKMKKGSIVKVRRLTDTWKM</sequence>
<protein>
    <recommendedName>
        <fullName evidence="1">Carbamoyl phosphate synthase large chain</fullName>
        <ecNumber evidence="1">6.3.4.16</ecNumber>
        <ecNumber evidence="1">6.3.5.5</ecNumber>
    </recommendedName>
    <alternativeName>
        <fullName evidence="1">Carbamoyl phosphate synthetase ammonia chain</fullName>
    </alternativeName>
</protein>
<keyword id="KW-0028">Amino-acid biosynthesis</keyword>
<keyword id="KW-0055">Arginine biosynthesis</keyword>
<keyword id="KW-0067">ATP-binding</keyword>
<keyword id="KW-0436">Ligase</keyword>
<keyword id="KW-0460">Magnesium</keyword>
<keyword id="KW-0464">Manganese</keyword>
<keyword id="KW-0479">Metal-binding</keyword>
<keyword id="KW-0547">Nucleotide-binding</keyword>
<keyword id="KW-0665">Pyrimidine biosynthesis</keyword>
<keyword id="KW-1185">Reference proteome</keyword>
<keyword id="KW-0677">Repeat</keyword>
<feature type="chain" id="PRO_0000145058" description="Carbamoyl phosphate synthase large chain">
    <location>
        <begin position="1"/>
        <end position="1099"/>
    </location>
</feature>
<feature type="domain" description="ATP-grasp 1" evidence="1">
    <location>
        <begin position="133"/>
        <end position="328"/>
    </location>
</feature>
<feature type="domain" description="ATP-grasp 2" evidence="1">
    <location>
        <begin position="666"/>
        <end position="857"/>
    </location>
</feature>
<feature type="domain" description="MGS-like" evidence="1">
    <location>
        <begin position="945"/>
        <end position="1099"/>
    </location>
</feature>
<feature type="region of interest" description="Carboxyphosphate synthetic domain" evidence="1">
    <location>
        <begin position="1"/>
        <end position="402"/>
    </location>
</feature>
<feature type="region of interest" description="Oligomerization domain" evidence="1">
    <location>
        <begin position="403"/>
        <end position="541"/>
    </location>
</feature>
<feature type="region of interest" description="Carbamoyl phosphate synthetic domain" evidence="1">
    <location>
        <begin position="542"/>
        <end position="944"/>
    </location>
</feature>
<feature type="region of interest" description="Allosteric domain" evidence="1">
    <location>
        <begin position="945"/>
        <end position="1099"/>
    </location>
</feature>
<feature type="binding site" evidence="1">
    <location>
        <position position="129"/>
    </location>
    <ligand>
        <name>ATP</name>
        <dbReference type="ChEBI" id="CHEBI:30616"/>
        <label>1</label>
    </ligand>
</feature>
<feature type="binding site" evidence="1">
    <location>
        <position position="169"/>
    </location>
    <ligand>
        <name>ATP</name>
        <dbReference type="ChEBI" id="CHEBI:30616"/>
        <label>1</label>
    </ligand>
</feature>
<feature type="binding site" evidence="1">
    <location>
        <position position="175"/>
    </location>
    <ligand>
        <name>ATP</name>
        <dbReference type="ChEBI" id="CHEBI:30616"/>
        <label>1</label>
    </ligand>
</feature>
<feature type="binding site" evidence="1">
    <location>
        <position position="176"/>
    </location>
    <ligand>
        <name>ATP</name>
        <dbReference type="ChEBI" id="CHEBI:30616"/>
        <label>1</label>
    </ligand>
</feature>
<feature type="binding site" evidence="1">
    <location>
        <position position="208"/>
    </location>
    <ligand>
        <name>ATP</name>
        <dbReference type="ChEBI" id="CHEBI:30616"/>
        <label>1</label>
    </ligand>
</feature>
<feature type="binding site" evidence="1">
    <location>
        <position position="210"/>
    </location>
    <ligand>
        <name>ATP</name>
        <dbReference type="ChEBI" id="CHEBI:30616"/>
        <label>1</label>
    </ligand>
</feature>
<feature type="binding site" evidence="1">
    <location>
        <position position="215"/>
    </location>
    <ligand>
        <name>ATP</name>
        <dbReference type="ChEBI" id="CHEBI:30616"/>
        <label>1</label>
    </ligand>
</feature>
<feature type="binding site" evidence="1">
    <location>
        <position position="241"/>
    </location>
    <ligand>
        <name>ATP</name>
        <dbReference type="ChEBI" id="CHEBI:30616"/>
        <label>1</label>
    </ligand>
</feature>
<feature type="binding site" evidence="1">
    <location>
        <position position="242"/>
    </location>
    <ligand>
        <name>ATP</name>
        <dbReference type="ChEBI" id="CHEBI:30616"/>
        <label>1</label>
    </ligand>
</feature>
<feature type="binding site" evidence="1">
    <location>
        <position position="243"/>
    </location>
    <ligand>
        <name>ATP</name>
        <dbReference type="ChEBI" id="CHEBI:30616"/>
        <label>1</label>
    </ligand>
</feature>
<feature type="binding site" evidence="1">
    <location>
        <position position="285"/>
    </location>
    <ligand>
        <name>ATP</name>
        <dbReference type="ChEBI" id="CHEBI:30616"/>
        <label>1</label>
    </ligand>
</feature>
<feature type="binding site" evidence="1">
    <location>
        <position position="285"/>
    </location>
    <ligand>
        <name>Mg(2+)</name>
        <dbReference type="ChEBI" id="CHEBI:18420"/>
        <label>1</label>
    </ligand>
</feature>
<feature type="binding site" evidence="1">
    <location>
        <position position="285"/>
    </location>
    <ligand>
        <name>Mn(2+)</name>
        <dbReference type="ChEBI" id="CHEBI:29035"/>
        <label>1</label>
    </ligand>
</feature>
<feature type="binding site" evidence="1">
    <location>
        <position position="299"/>
    </location>
    <ligand>
        <name>ATP</name>
        <dbReference type="ChEBI" id="CHEBI:30616"/>
        <label>1</label>
    </ligand>
</feature>
<feature type="binding site" evidence="1">
    <location>
        <position position="299"/>
    </location>
    <ligand>
        <name>Mg(2+)</name>
        <dbReference type="ChEBI" id="CHEBI:18420"/>
        <label>1</label>
    </ligand>
</feature>
<feature type="binding site" evidence="1">
    <location>
        <position position="299"/>
    </location>
    <ligand>
        <name>Mg(2+)</name>
        <dbReference type="ChEBI" id="CHEBI:18420"/>
        <label>2</label>
    </ligand>
</feature>
<feature type="binding site" evidence="1">
    <location>
        <position position="299"/>
    </location>
    <ligand>
        <name>Mn(2+)</name>
        <dbReference type="ChEBI" id="CHEBI:29035"/>
        <label>1</label>
    </ligand>
</feature>
<feature type="binding site" evidence="1">
    <location>
        <position position="299"/>
    </location>
    <ligand>
        <name>Mn(2+)</name>
        <dbReference type="ChEBI" id="CHEBI:29035"/>
        <label>2</label>
    </ligand>
</feature>
<feature type="binding site" evidence="1">
    <location>
        <position position="301"/>
    </location>
    <ligand>
        <name>Mg(2+)</name>
        <dbReference type="ChEBI" id="CHEBI:18420"/>
        <label>2</label>
    </ligand>
</feature>
<feature type="binding site" evidence="1">
    <location>
        <position position="301"/>
    </location>
    <ligand>
        <name>Mn(2+)</name>
        <dbReference type="ChEBI" id="CHEBI:29035"/>
        <label>2</label>
    </ligand>
</feature>
<feature type="binding site" evidence="1">
    <location>
        <position position="702"/>
    </location>
    <ligand>
        <name>ATP</name>
        <dbReference type="ChEBI" id="CHEBI:30616"/>
        <label>2</label>
    </ligand>
</feature>
<feature type="binding site" evidence="1">
    <location>
        <position position="741"/>
    </location>
    <ligand>
        <name>ATP</name>
        <dbReference type="ChEBI" id="CHEBI:30616"/>
        <label>2</label>
    </ligand>
</feature>
<feature type="binding site" evidence="1">
    <location>
        <position position="743"/>
    </location>
    <ligand>
        <name>ATP</name>
        <dbReference type="ChEBI" id="CHEBI:30616"/>
        <label>2</label>
    </ligand>
</feature>
<feature type="binding site" evidence="1">
    <location>
        <position position="748"/>
    </location>
    <ligand>
        <name>ATP</name>
        <dbReference type="ChEBI" id="CHEBI:30616"/>
        <label>2</label>
    </ligand>
</feature>
<feature type="binding site" evidence="1">
    <location>
        <position position="773"/>
    </location>
    <ligand>
        <name>ATP</name>
        <dbReference type="ChEBI" id="CHEBI:30616"/>
        <label>2</label>
    </ligand>
</feature>
<feature type="binding site" evidence="1">
    <location>
        <position position="774"/>
    </location>
    <ligand>
        <name>ATP</name>
        <dbReference type="ChEBI" id="CHEBI:30616"/>
        <label>2</label>
    </ligand>
</feature>
<feature type="binding site" evidence="1">
    <location>
        <position position="775"/>
    </location>
    <ligand>
        <name>ATP</name>
        <dbReference type="ChEBI" id="CHEBI:30616"/>
        <label>2</label>
    </ligand>
</feature>
<feature type="binding site" evidence="1">
    <location>
        <position position="776"/>
    </location>
    <ligand>
        <name>ATP</name>
        <dbReference type="ChEBI" id="CHEBI:30616"/>
        <label>2</label>
    </ligand>
</feature>
<feature type="binding site" evidence="1">
    <location>
        <position position="816"/>
    </location>
    <ligand>
        <name>ATP</name>
        <dbReference type="ChEBI" id="CHEBI:30616"/>
        <label>2</label>
    </ligand>
</feature>
<feature type="binding site" evidence="1">
    <location>
        <position position="816"/>
    </location>
    <ligand>
        <name>Mg(2+)</name>
        <dbReference type="ChEBI" id="CHEBI:18420"/>
        <label>3</label>
    </ligand>
</feature>
<feature type="binding site" evidence="1">
    <location>
        <position position="816"/>
    </location>
    <ligand>
        <name>Mn(2+)</name>
        <dbReference type="ChEBI" id="CHEBI:29035"/>
        <label>3</label>
    </ligand>
</feature>
<feature type="binding site" evidence="1">
    <location>
        <position position="828"/>
    </location>
    <ligand>
        <name>ATP</name>
        <dbReference type="ChEBI" id="CHEBI:30616"/>
        <label>2</label>
    </ligand>
</feature>
<feature type="binding site" evidence="1">
    <location>
        <position position="828"/>
    </location>
    <ligand>
        <name>Mg(2+)</name>
        <dbReference type="ChEBI" id="CHEBI:18420"/>
        <label>3</label>
    </ligand>
</feature>
<feature type="binding site" evidence="1">
    <location>
        <position position="828"/>
    </location>
    <ligand>
        <name>Mg(2+)</name>
        <dbReference type="ChEBI" id="CHEBI:18420"/>
        <label>4</label>
    </ligand>
</feature>
<feature type="binding site" evidence="1">
    <location>
        <position position="828"/>
    </location>
    <ligand>
        <name>Mn(2+)</name>
        <dbReference type="ChEBI" id="CHEBI:29035"/>
        <label>3</label>
    </ligand>
</feature>
<feature type="binding site" evidence="1">
    <location>
        <position position="828"/>
    </location>
    <ligand>
        <name>Mn(2+)</name>
        <dbReference type="ChEBI" id="CHEBI:29035"/>
        <label>4</label>
    </ligand>
</feature>
<feature type="binding site" evidence="1">
    <location>
        <position position="830"/>
    </location>
    <ligand>
        <name>Mg(2+)</name>
        <dbReference type="ChEBI" id="CHEBI:18420"/>
        <label>4</label>
    </ligand>
</feature>
<feature type="binding site" evidence="1">
    <location>
        <position position="830"/>
    </location>
    <ligand>
        <name>Mn(2+)</name>
        <dbReference type="ChEBI" id="CHEBI:29035"/>
        <label>4</label>
    </ligand>
</feature>
<evidence type="ECO:0000255" key="1">
    <source>
        <dbReference type="HAMAP-Rule" id="MF_01210"/>
    </source>
</evidence>
<reference key="1">
    <citation type="journal article" date="1999" name="Nature">
        <title>Evidence for lateral gene transfer between Archaea and Bacteria from genome sequence of Thermotoga maritima.</title>
        <authorList>
            <person name="Nelson K.E."/>
            <person name="Clayton R.A."/>
            <person name="Gill S.R."/>
            <person name="Gwinn M.L."/>
            <person name="Dodson R.J."/>
            <person name="Haft D.H."/>
            <person name="Hickey E.K."/>
            <person name="Peterson J.D."/>
            <person name="Nelson W.C."/>
            <person name="Ketchum K.A."/>
            <person name="McDonald L.A."/>
            <person name="Utterback T.R."/>
            <person name="Malek J.A."/>
            <person name="Linher K.D."/>
            <person name="Garrett M.M."/>
            <person name="Stewart A.M."/>
            <person name="Cotton M.D."/>
            <person name="Pratt M.S."/>
            <person name="Phillips C.A."/>
            <person name="Richardson D.L."/>
            <person name="Heidelberg J.F."/>
            <person name="Sutton G.G."/>
            <person name="Fleischmann R.D."/>
            <person name="Eisen J.A."/>
            <person name="White O."/>
            <person name="Salzberg S.L."/>
            <person name="Smith H.O."/>
            <person name="Venter J.C."/>
            <person name="Fraser C.M."/>
        </authorList>
    </citation>
    <scope>NUCLEOTIDE SEQUENCE [LARGE SCALE GENOMIC DNA]</scope>
    <source>
        <strain>ATCC 43589 / DSM 3109 / JCM 10099 / NBRC 100826 / MSB8</strain>
    </source>
</reference>
<dbReference type="EC" id="6.3.4.16" evidence="1"/>
<dbReference type="EC" id="6.3.5.5" evidence="1"/>
<dbReference type="EMBL" id="AE000512">
    <property type="protein sequence ID" value="AAD35642.1"/>
    <property type="molecule type" value="Genomic_DNA"/>
</dbReference>
<dbReference type="PIR" id="C72363">
    <property type="entry name" value="C72363"/>
</dbReference>
<dbReference type="RefSeq" id="NP_228367.1">
    <property type="nucleotide sequence ID" value="NC_000853.1"/>
</dbReference>
<dbReference type="RefSeq" id="WP_004081324.1">
    <property type="nucleotide sequence ID" value="NC_000853.1"/>
</dbReference>
<dbReference type="SMR" id="Q9WZ27"/>
<dbReference type="FunCoup" id="Q9WZ27">
    <property type="interactions" value="364"/>
</dbReference>
<dbReference type="STRING" id="243274.TM_0557"/>
<dbReference type="PaxDb" id="243274-THEMA_01890"/>
<dbReference type="EnsemblBacteria" id="AAD35642">
    <property type="protein sequence ID" value="AAD35642"/>
    <property type="gene ID" value="TM_0557"/>
</dbReference>
<dbReference type="KEGG" id="tma:TM0557"/>
<dbReference type="KEGG" id="tmi:THEMA_01890"/>
<dbReference type="KEGG" id="tmm:Tmari_0554"/>
<dbReference type="KEGG" id="tmw:THMA_0570"/>
<dbReference type="eggNOG" id="COG0458">
    <property type="taxonomic scope" value="Bacteria"/>
</dbReference>
<dbReference type="InParanoid" id="Q9WZ27"/>
<dbReference type="OrthoDB" id="9804197at2"/>
<dbReference type="UniPathway" id="UPA00068">
    <property type="reaction ID" value="UER00171"/>
</dbReference>
<dbReference type="UniPathway" id="UPA00070">
    <property type="reaction ID" value="UER00115"/>
</dbReference>
<dbReference type="Proteomes" id="UP000008183">
    <property type="component" value="Chromosome"/>
</dbReference>
<dbReference type="GO" id="GO:0005737">
    <property type="term" value="C:cytoplasm"/>
    <property type="evidence" value="ECO:0000318"/>
    <property type="project" value="GO_Central"/>
</dbReference>
<dbReference type="GO" id="GO:0005524">
    <property type="term" value="F:ATP binding"/>
    <property type="evidence" value="ECO:0007669"/>
    <property type="project" value="UniProtKB-UniRule"/>
</dbReference>
<dbReference type="GO" id="GO:0004087">
    <property type="term" value="F:carbamoyl-phosphate synthase (ammonia) activity"/>
    <property type="evidence" value="ECO:0007669"/>
    <property type="project" value="RHEA"/>
</dbReference>
<dbReference type="GO" id="GO:0004088">
    <property type="term" value="F:carbamoyl-phosphate synthase (glutamine-hydrolyzing) activity"/>
    <property type="evidence" value="ECO:0007669"/>
    <property type="project" value="UniProtKB-UniRule"/>
</dbReference>
<dbReference type="GO" id="GO:0046872">
    <property type="term" value="F:metal ion binding"/>
    <property type="evidence" value="ECO:0007669"/>
    <property type="project" value="UniProtKB-KW"/>
</dbReference>
<dbReference type="GO" id="GO:0044205">
    <property type="term" value="P:'de novo' UMP biosynthetic process"/>
    <property type="evidence" value="ECO:0007669"/>
    <property type="project" value="UniProtKB-UniRule"/>
</dbReference>
<dbReference type="GO" id="GO:0006541">
    <property type="term" value="P:glutamine metabolic process"/>
    <property type="evidence" value="ECO:0000318"/>
    <property type="project" value="GO_Central"/>
</dbReference>
<dbReference type="GO" id="GO:0006526">
    <property type="term" value="P:L-arginine biosynthetic process"/>
    <property type="evidence" value="ECO:0007669"/>
    <property type="project" value="UniProtKB-UniRule"/>
</dbReference>
<dbReference type="CDD" id="cd01424">
    <property type="entry name" value="MGS_CPS_II"/>
    <property type="match status" value="1"/>
</dbReference>
<dbReference type="FunFam" id="1.10.1030.10:FF:000002">
    <property type="entry name" value="Carbamoyl-phosphate synthase large chain"/>
    <property type="match status" value="1"/>
</dbReference>
<dbReference type="FunFam" id="3.30.1490.20:FF:000001">
    <property type="entry name" value="Carbamoyl-phosphate synthase large chain"/>
    <property type="match status" value="1"/>
</dbReference>
<dbReference type="FunFam" id="3.30.470.20:FF:000007">
    <property type="entry name" value="Carbamoyl-phosphate synthase large chain"/>
    <property type="match status" value="1"/>
</dbReference>
<dbReference type="FunFam" id="3.30.470.20:FF:000026">
    <property type="entry name" value="Carbamoyl-phosphate synthase large chain"/>
    <property type="match status" value="1"/>
</dbReference>
<dbReference type="FunFam" id="3.40.50.20:FF:000001">
    <property type="entry name" value="Carbamoyl-phosphate synthase large chain"/>
    <property type="match status" value="1"/>
</dbReference>
<dbReference type="FunFam" id="3.40.50.20:FF:000003">
    <property type="entry name" value="Carbamoyl-phosphate synthase large chain"/>
    <property type="match status" value="1"/>
</dbReference>
<dbReference type="Gene3D" id="3.40.50.20">
    <property type="match status" value="2"/>
</dbReference>
<dbReference type="Gene3D" id="3.30.1490.20">
    <property type="entry name" value="ATP-grasp fold, A domain"/>
    <property type="match status" value="1"/>
</dbReference>
<dbReference type="Gene3D" id="3.30.470.20">
    <property type="entry name" value="ATP-grasp fold, B domain"/>
    <property type="match status" value="2"/>
</dbReference>
<dbReference type="Gene3D" id="1.10.1030.10">
    <property type="entry name" value="Carbamoyl-phosphate synthetase, large subunit oligomerisation domain"/>
    <property type="match status" value="1"/>
</dbReference>
<dbReference type="Gene3D" id="3.40.50.1380">
    <property type="entry name" value="Methylglyoxal synthase-like domain"/>
    <property type="match status" value="1"/>
</dbReference>
<dbReference type="HAMAP" id="MF_01210_A">
    <property type="entry name" value="CPSase_L_chain_A"/>
    <property type="match status" value="1"/>
</dbReference>
<dbReference type="HAMAP" id="MF_01210_B">
    <property type="entry name" value="CPSase_L_chain_B"/>
    <property type="match status" value="1"/>
</dbReference>
<dbReference type="InterPro" id="IPR011761">
    <property type="entry name" value="ATP-grasp"/>
</dbReference>
<dbReference type="InterPro" id="IPR013815">
    <property type="entry name" value="ATP_grasp_subdomain_1"/>
</dbReference>
<dbReference type="InterPro" id="IPR006275">
    <property type="entry name" value="CarbamoylP_synth_lsu"/>
</dbReference>
<dbReference type="InterPro" id="IPR005480">
    <property type="entry name" value="CarbamoylP_synth_lsu_oligo"/>
</dbReference>
<dbReference type="InterPro" id="IPR036897">
    <property type="entry name" value="CarbamoylP_synth_lsu_oligo_sf"/>
</dbReference>
<dbReference type="InterPro" id="IPR005479">
    <property type="entry name" value="CbamoylP_synth_lsu-like_ATP-bd"/>
</dbReference>
<dbReference type="InterPro" id="IPR005483">
    <property type="entry name" value="CbamoylP_synth_lsu_CPSase_dom"/>
</dbReference>
<dbReference type="InterPro" id="IPR011607">
    <property type="entry name" value="MGS-like_dom"/>
</dbReference>
<dbReference type="InterPro" id="IPR036914">
    <property type="entry name" value="MGS-like_dom_sf"/>
</dbReference>
<dbReference type="InterPro" id="IPR033937">
    <property type="entry name" value="MGS_CPS_CarB"/>
</dbReference>
<dbReference type="InterPro" id="IPR016185">
    <property type="entry name" value="PreATP-grasp_dom_sf"/>
</dbReference>
<dbReference type="NCBIfam" id="TIGR01369">
    <property type="entry name" value="CPSaseII_lrg"/>
    <property type="match status" value="1"/>
</dbReference>
<dbReference type="NCBIfam" id="NF003671">
    <property type="entry name" value="PRK05294.1"/>
    <property type="match status" value="1"/>
</dbReference>
<dbReference type="NCBIfam" id="NF009455">
    <property type="entry name" value="PRK12815.1"/>
    <property type="match status" value="1"/>
</dbReference>
<dbReference type="PANTHER" id="PTHR11405:SF53">
    <property type="entry name" value="CARBAMOYL-PHOSPHATE SYNTHASE [AMMONIA], MITOCHONDRIAL"/>
    <property type="match status" value="1"/>
</dbReference>
<dbReference type="PANTHER" id="PTHR11405">
    <property type="entry name" value="CARBAMOYLTRANSFERASE FAMILY MEMBER"/>
    <property type="match status" value="1"/>
</dbReference>
<dbReference type="Pfam" id="PF02786">
    <property type="entry name" value="CPSase_L_D2"/>
    <property type="match status" value="2"/>
</dbReference>
<dbReference type="Pfam" id="PF02787">
    <property type="entry name" value="CPSase_L_D3"/>
    <property type="match status" value="1"/>
</dbReference>
<dbReference type="Pfam" id="PF02142">
    <property type="entry name" value="MGS"/>
    <property type="match status" value="1"/>
</dbReference>
<dbReference type="PRINTS" id="PR00098">
    <property type="entry name" value="CPSASE"/>
</dbReference>
<dbReference type="SMART" id="SM01096">
    <property type="entry name" value="CPSase_L_D3"/>
    <property type="match status" value="1"/>
</dbReference>
<dbReference type="SMART" id="SM00851">
    <property type="entry name" value="MGS"/>
    <property type="match status" value="1"/>
</dbReference>
<dbReference type="SUPFAM" id="SSF48108">
    <property type="entry name" value="Carbamoyl phosphate synthetase, large subunit connection domain"/>
    <property type="match status" value="1"/>
</dbReference>
<dbReference type="SUPFAM" id="SSF56059">
    <property type="entry name" value="Glutathione synthetase ATP-binding domain-like"/>
    <property type="match status" value="2"/>
</dbReference>
<dbReference type="SUPFAM" id="SSF52335">
    <property type="entry name" value="Methylglyoxal synthase-like"/>
    <property type="match status" value="1"/>
</dbReference>
<dbReference type="SUPFAM" id="SSF52440">
    <property type="entry name" value="PreATP-grasp domain"/>
    <property type="match status" value="2"/>
</dbReference>
<dbReference type="PROSITE" id="PS50975">
    <property type="entry name" value="ATP_GRASP"/>
    <property type="match status" value="2"/>
</dbReference>
<dbReference type="PROSITE" id="PS00866">
    <property type="entry name" value="CPSASE_1"/>
    <property type="match status" value="2"/>
</dbReference>
<dbReference type="PROSITE" id="PS00867">
    <property type="entry name" value="CPSASE_2"/>
    <property type="match status" value="2"/>
</dbReference>
<dbReference type="PROSITE" id="PS51855">
    <property type="entry name" value="MGS"/>
    <property type="match status" value="1"/>
</dbReference>